<proteinExistence type="evidence at protein level"/>
<evidence type="ECO:0000255" key="1"/>
<evidence type="ECO:0000269" key="2">
    <source>
    </source>
</evidence>
<evidence type="ECO:0000269" key="3">
    <source>
    </source>
</evidence>
<evidence type="ECO:0000303" key="4">
    <source>
    </source>
</evidence>
<evidence type="ECO:0000305" key="5"/>
<name>DRAM1_HUMAN</name>
<comment type="function">
    <text evidence="2 3">Lysosomal modulator of autophagy that plays a central role in p53/TP53-mediated apoptosis. Not involved in p73/TP73-mediated autophagy.</text>
</comment>
<comment type="interaction">
    <interactant intactId="EBI-10305400">
        <id>Q8N682</id>
    </interactant>
    <interactant intactId="EBI-10305393">
        <id>Q9H246</id>
        <label>C1orf21</label>
    </interactant>
    <organismsDiffer>false</organismsDiffer>
    <experiments>3</experiments>
</comment>
<comment type="interaction">
    <interactant intactId="EBI-10305400">
        <id>Q8N682</id>
    </interactant>
    <interactant intactId="EBI-13362802">
        <id>Q6UWJ8-2</id>
        <label>CD164L2</label>
    </interactant>
    <organismsDiffer>false</organismsDiffer>
    <experiments>3</experiments>
</comment>
<comment type="interaction">
    <interactant intactId="EBI-10305400">
        <id>Q8N682</id>
    </interactant>
    <interactant intactId="EBI-17274839">
        <id>P58418</id>
        <label>CLRN1</label>
    </interactant>
    <organismsDiffer>false</organismsDiffer>
    <experiments>3</experiments>
</comment>
<comment type="interaction">
    <interactant intactId="EBI-10305400">
        <id>Q8N682</id>
    </interactant>
    <interactant intactId="EBI-17640610">
        <id>P34910-2</id>
        <label>EVI2B</label>
    </interactant>
    <organismsDiffer>false</organismsDiffer>
    <experiments>3</experiments>
</comment>
<comment type="interaction">
    <interactant intactId="EBI-10305400">
        <id>Q8N682</id>
    </interactant>
    <interactant intactId="EBI-18076404">
        <id>O15529</id>
        <label>GPR42</label>
    </interactant>
    <organismsDiffer>false</organismsDiffer>
    <experiments>3</experiments>
</comment>
<comment type="interaction">
    <interactant intactId="EBI-10305400">
        <id>Q8N682</id>
    </interactant>
    <interactant intactId="EBI-3925442">
        <id>Q9HCJ2</id>
        <label>LRRC4C</label>
    </interactant>
    <organismsDiffer>false</organismsDiffer>
    <experiments>3</experiments>
</comment>
<comment type="interaction">
    <interactant intactId="EBI-10305400">
        <id>Q8N682</id>
    </interactant>
    <interactant intactId="EBI-721391">
        <id>Q9GZW8</id>
        <label>MS4A7</label>
    </interactant>
    <organismsDiffer>false</organismsDiffer>
    <experiments>3</experiments>
</comment>
<comment type="interaction">
    <interactant intactId="EBI-10305400">
        <id>Q8N682</id>
    </interactant>
    <interactant intactId="EBI-6268651">
        <id>Q9NPL8</id>
        <label>TIMMDC1</label>
    </interactant>
    <organismsDiffer>false</organismsDiffer>
    <experiments>3</experiments>
</comment>
<comment type="subcellular location">
    <subcellularLocation>
        <location evidence="2">Lysosome membrane</location>
        <topology evidence="2">Multi-pass membrane protein</topology>
    </subcellularLocation>
</comment>
<comment type="alternative products">
    <event type="alternative splicing"/>
    <isoform>
        <id>Q8N682-1</id>
        <name>1</name>
        <sequence type="displayed"/>
    </isoform>
    <isoform>
        <id>Q8N682-2</id>
        <name>2</name>
        <sequence type="described" ref="VSP_056980"/>
    </isoform>
</comment>
<comment type="induction">
    <text evidence="2 3">By p53/TP53 and p73/TP73. Directly activated by p53/TP53. Significantly down-regulated in tumor cell lines by methylation-dependent transcriptional silencing.</text>
</comment>
<comment type="similarity">
    <text evidence="5">Belongs to the DRAM/TMEM150 family.</text>
</comment>
<comment type="sequence caution" evidence="5">
    <conflict type="erroneous initiation">
        <sequence resource="EMBL-CDS" id="BAA92091"/>
    </conflict>
</comment>
<comment type="online information" name="Atlas of Genetics and Cytogenetics in Oncology and Haematology">
    <link uri="https://atlasgeneticsoncology.org/gene/44093/DRAM"/>
</comment>
<accession>Q8N682</accession>
<accession>B7Z4T0</accession>
<accession>Q7L3E3</accession>
<accession>Q9NUN1</accession>
<dbReference type="EMBL" id="AK002121">
    <property type="protein sequence ID" value="BAA92091.1"/>
    <property type="status" value="ALT_INIT"/>
    <property type="molecule type" value="mRNA"/>
</dbReference>
<dbReference type="EMBL" id="AK297785">
    <property type="protein sequence ID" value="BAH12666.1"/>
    <property type="molecule type" value="mRNA"/>
</dbReference>
<dbReference type="EMBL" id="AC063950">
    <property type="status" value="NOT_ANNOTATED_CDS"/>
    <property type="molecule type" value="Genomic_DNA"/>
</dbReference>
<dbReference type="EMBL" id="AC079907">
    <property type="status" value="NOT_ANNOTATED_CDS"/>
    <property type="molecule type" value="Genomic_DNA"/>
</dbReference>
<dbReference type="EMBL" id="AC084398">
    <property type="status" value="NOT_ANNOTATED_CDS"/>
    <property type="molecule type" value="Genomic_DNA"/>
</dbReference>
<dbReference type="EMBL" id="BC013773">
    <property type="protein sequence ID" value="AAH13773.4"/>
    <property type="molecule type" value="mRNA"/>
</dbReference>
<dbReference type="EMBL" id="BC018435">
    <property type="protein sequence ID" value="AAH18435.1"/>
    <property type="molecule type" value="mRNA"/>
</dbReference>
<dbReference type="CCDS" id="CCDS41823.1">
    <molecule id="Q8N682-1"/>
</dbReference>
<dbReference type="RefSeq" id="NP_060840.2">
    <molecule id="Q8N682-1"/>
    <property type="nucleotide sequence ID" value="NM_018370.3"/>
</dbReference>
<dbReference type="SMR" id="Q8N682"/>
<dbReference type="BioGRID" id="120613">
    <property type="interactions" value="12"/>
</dbReference>
<dbReference type="FunCoup" id="Q8N682">
    <property type="interactions" value="623"/>
</dbReference>
<dbReference type="IntAct" id="Q8N682">
    <property type="interactions" value="10"/>
</dbReference>
<dbReference type="STRING" id="9606.ENSP00000258534"/>
<dbReference type="TCDB" id="8.A.113.1.8">
    <property type="family name" value="the tentonin or tmem150 (tmem150) family"/>
</dbReference>
<dbReference type="iPTMnet" id="Q8N682"/>
<dbReference type="PhosphoSitePlus" id="Q8N682"/>
<dbReference type="BioMuta" id="DRAM1"/>
<dbReference type="DMDM" id="74729109"/>
<dbReference type="MassIVE" id="Q8N682"/>
<dbReference type="PaxDb" id="9606-ENSP00000258534"/>
<dbReference type="PeptideAtlas" id="Q8N682"/>
<dbReference type="Antibodypedia" id="9122">
    <property type="antibodies" value="284 antibodies from 30 providers"/>
</dbReference>
<dbReference type="DNASU" id="55332"/>
<dbReference type="Ensembl" id="ENST00000258534.13">
    <molecule id="Q8N682-1"/>
    <property type="protein sequence ID" value="ENSP00000258534.8"/>
    <property type="gene ID" value="ENSG00000136048.14"/>
</dbReference>
<dbReference type="Ensembl" id="ENST00000544152.5">
    <molecule id="Q8N682-2"/>
    <property type="protein sequence ID" value="ENSP00000445827.1"/>
    <property type="gene ID" value="ENSG00000136048.14"/>
</dbReference>
<dbReference type="GeneID" id="55332"/>
<dbReference type="KEGG" id="hsa:55332"/>
<dbReference type="MANE-Select" id="ENST00000258534.13">
    <property type="protein sequence ID" value="ENSP00000258534.8"/>
    <property type="RefSeq nucleotide sequence ID" value="NM_018370.3"/>
    <property type="RefSeq protein sequence ID" value="NP_060840.2"/>
</dbReference>
<dbReference type="UCSC" id="uc001tix.4">
    <molecule id="Q8N682-1"/>
    <property type="organism name" value="human"/>
</dbReference>
<dbReference type="AGR" id="HGNC:25645"/>
<dbReference type="CTD" id="55332"/>
<dbReference type="DisGeNET" id="55332"/>
<dbReference type="GeneCards" id="DRAM1"/>
<dbReference type="HGNC" id="HGNC:25645">
    <property type="gene designation" value="DRAM1"/>
</dbReference>
<dbReference type="HPA" id="ENSG00000136048">
    <property type="expression patterns" value="Tissue enhanced (lung)"/>
</dbReference>
<dbReference type="MIM" id="610776">
    <property type="type" value="gene"/>
</dbReference>
<dbReference type="neXtProt" id="NX_Q8N682"/>
<dbReference type="OpenTargets" id="ENSG00000136048"/>
<dbReference type="PharmGKB" id="PA165512564"/>
<dbReference type="VEuPathDB" id="HostDB:ENSG00000136048"/>
<dbReference type="eggNOG" id="KOG4320">
    <property type="taxonomic scope" value="Eukaryota"/>
</dbReference>
<dbReference type="GeneTree" id="ENSGT01030000234578"/>
<dbReference type="HOGENOM" id="CLU_059992_2_2_1"/>
<dbReference type="InParanoid" id="Q8N682"/>
<dbReference type="OMA" id="QNRLALW"/>
<dbReference type="OrthoDB" id="191706at2759"/>
<dbReference type="PAN-GO" id="Q8N682">
    <property type="GO annotations" value="2 GO annotations based on evolutionary models"/>
</dbReference>
<dbReference type="PhylomeDB" id="Q8N682"/>
<dbReference type="TreeFam" id="TF314508"/>
<dbReference type="PathwayCommons" id="Q8N682"/>
<dbReference type="SignaLink" id="Q8N682"/>
<dbReference type="SIGNOR" id="Q8N682"/>
<dbReference type="BioGRID-ORCS" id="55332">
    <property type="hits" value="15 hits in 1152 CRISPR screens"/>
</dbReference>
<dbReference type="ChiTaRS" id="DRAM1">
    <property type="organism name" value="human"/>
</dbReference>
<dbReference type="GenomeRNAi" id="55332"/>
<dbReference type="Pharos" id="Q8N682">
    <property type="development level" value="Tbio"/>
</dbReference>
<dbReference type="PRO" id="PR:Q8N682"/>
<dbReference type="Proteomes" id="UP000005640">
    <property type="component" value="Chromosome 12"/>
</dbReference>
<dbReference type="RNAct" id="Q8N682">
    <property type="molecule type" value="protein"/>
</dbReference>
<dbReference type="Bgee" id="ENSG00000136048">
    <property type="expression patterns" value="Expressed in lower lobe of lung and 151 other cell types or tissues"/>
</dbReference>
<dbReference type="ExpressionAtlas" id="Q8N682">
    <property type="expression patterns" value="baseline and differential"/>
</dbReference>
<dbReference type="GO" id="GO:0005737">
    <property type="term" value="C:cytoplasm"/>
    <property type="evidence" value="ECO:0000314"/>
    <property type="project" value="UniProtKB"/>
</dbReference>
<dbReference type="GO" id="GO:0005765">
    <property type="term" value="C:lysosomal membrane"/>
    <property type="evidence" value="ECO:0007669"/>
    <property type="project" value="UniProtKB-SubCell"/>
</dbReference>
<dbReference type="GO" id="GO:0005764">
    <property type="term" value="C:lysosome"/>
    <property type="evidence" value="ECO:0000314"/>
    <property type="project" value="UniProtKB"/>
</dbReference>
<dbReference type="GO" id="GO:0006915">
    <property type="term" value="P:apoptotic process"/>
    <property type="evidence" value="ECO:0007669"/>
    <property type="project" value="UniProtKB-KW"/>
</dbReference>
<dbReference type="GO" id="GO:0006914">
    <property type="term" value="P:autophagy"/>
    <property type="evidence" value="ECO:0007669"/>
    <property type="project" value="UniProtKB-KW"/>
</dbReference>
<dbReference type="GO" id="GO:0090650">
    <property type="term" value="P:cellular response to oxygen-glucose deprivation"/>
    <property type="evidence" value="ECO:0007669"/>
    <property type="project" value="Ensembl"/>
</dbReference>
<dbReference type="GO" id="GO:0010506">
    <property type="term" value="P:regulation of autophagy"/>
    <property type="evidence" value="ECO:0000314"/>
    <property type="project" value="UniProtKB"/>
</dbReference>
<dbReference type="InterPro" id="IPR050911">
    <property type="entry name" value="DRAM/TMEM150_Autophagy_Mod"/>
</dbReference>
<dbReference type="InterPro" id="IPR019402">
    <property type="entry name" value="Frag1/DRAM/Sfk1"/>
</dbReference>
<dbReference type="PANTHER" id="PTHR21324:SF11">
    <property type="entry name" value="DNA DAMAGE-REGULATED AUTOPHAGY MODULATOR PROTEIN 1"/>
    <property type="match status" value="1"/>
</dbReference>
<dbReference type="PANTHER" id="PTHR21324">
    <property type="entry name" value="FASTING-INDUCIBLE INTEGRAL MEMBRANE PROTEIN TM6P1-RELATED"/>
    <property type="match status" value="1"/>
</dbReference>
<dbReference type="Pfam" id="PF10277">
    <property type="entry name" value="Frag1"/>
    <property type="match status" value="1"/>
</dbReference>
<protein>
    <recommendedName>
        <fullName>DNA damage-regulated autophagy modulator protein 1</fullName>
    </recommendedName>
    <alternativeName>
        <fullName>Damage-regulated autophagy modulator</fullName>
    </alternativeName>
</protein>
<keyword id="KW-0025">Alternative splicing</keyword>
<keyword id="KW-0053">Apoptosis</keyword>
<keyword id="KW-0072">Autophagy</keyword>
<keyword id="KW-0458">Lysosome</keyword>
<keyword id="KW-0472">Membrane</keyword>
<keyword id="KW-1267">Proteomics identification</keyword>
<keyword id="KW-1185">Reference proteome</keyword>
<keyword id="KW-0812">Transmembrane</keyword>
<keyword id="KW-1133">Transmembrane helix</keyword>
<gene>
    <name type="primary">DRAM1</name>
    <name type="synonym">DRAM</name>
</gene>
<organism>
    <name type="scientific">Homo sapiens</name>
    <name type="common">Human</name>
    <dbReference type="NCBI Taxonomy" id="9606"/>
    <lineage>
        <taxon>Eukaryota</taxon>
        <taxon>Metazoa</taxon>
        <taxon>Chordata</taxon>
        <taxon>Craniata</taxon>
        <taxon>Vertebrata</taxon>
        <taxon>Euteleostomi</taxon>
        <taxon>Mammalia</taxon>
        <taxon>Eutheria</taxon>
        <taxon>Euarchontoglires</taxon>
        <taxon>Primates</taxon>
        <taxon>Haplorrhini</taxon>
        <taxon>Catarrhini</taxon>
        <taxon>Hominidae</taxon>
        <taxon>Homo</taxon>
    </lineage>
</organism>
<sequence>MLCFLRGMAFVPFLLVTWSSAAFIISYVVAVLSGHVNPFLPYISDTGTTPPESGIFGFMINFSAFLGAATMYTRYKIVQKQNQTCYFSTPVFNLVSLVLGLVGCFGMGIVANFQELAVPVVHDGGALLAFVCGVVYTLLQSIISYKSCPQWNSLSTCHIRMVISAVSCAAVIPMIVCASLISITKLEWNPREKDYVYHVVSAICEWTVAFGFIFYFLTFIQDFQSVTLRISTEINGDI</sequence>
<feature type="chain" id="PRO_0000287436" description="DNA damage-regulated autophagy modulator protein 1">
    <location>
        <begin position="1"/>
        <end position="238"/>
    </location>
</feature>
<feature type="transmembrane region" description="Helical" evidence="1">
    <location>
        <begin position="9"/>
        <end position="29"/>
    </location>
</feature>
<feature type="transmembrane region" description="Helical" evidence="1">
    <location>
        <begin position="53"/>
        <end position="73"/>
    </location>
</feature>
<feature type="transmembrane region" description="Helical" evidence="1">
    <location>
        <begin position="91"/>
        <end position="111"/>
    </location>
</feature>
<feature type="transmembrane region" description="Helical" evidence="1">
    <location>
        <begin position="116"/>
        <end position="136"/>
    </location>
</feature>
<feature type="transmembrane region" description="Helical" evidence="1">
    <location>
        <begin position="161"/>
        <end position="181"/>
    </location>
</feature>
<feature type="transmembrane region" description="Helical" evidence="1">
    <location>
        <begin position="200"/>
        <end position="220"/>
    </location>
</feature>
<feature type="splice variant" id="VSP_056980" description="In isoform 2." evidence="4">
    <location>
        <begin position="113"/>
        <end position="222"/>
    </location>
</feature>
<reference key="1">
    <citation type="journal article" date="2004" name="Nat. Genet.">
        <title>Complete sequencing and characterization of 21,243 full-length human cDNAs.</title>
        <authorList>
            <person name="Ota T."/>
            <person name="Suzuki Y."/>
            <person name="Nishikawa T."/>
            <person name="Otsuki T."/>
            <person name="Sugiyama T."/>
            <person name="Irie R."/>
            <person name="Wakamatsu A."/>
            <person name="Hayashi K."/>
            <person name="Sato H."/>
            <person name="Nagai K."/>
            <person name="Kimura K."/>
            <person name="Makita H."/>
            <person name="Sekine M."/>
            <person name="Obayashi M."/>
            <person name="Nishi T."/>
            <person name="Shibahara T."/>
            <person name="Tanaka T."/>
            <person name="Ishii S."/>
            <person name="Yamamoto J."/>
            <person name="Saito K."/>
            <person name="Kawai Y."/>
            <person name="Isono Y."/>
            <person name="Nakamura Y."/>
            <person name="Nagahari K."/>
            <person name="Murakami K."/>
            <person name="Yasuda T."/>
            <person name="Iwayanagi T."/>
            <person name="Wagatsuma M."/>
            <person name="Shiratori A."/>
            <person name="Sudo H."/>
            <person name="Hosoiri T."/>
            <person name="Kaku Y."/>
            <person name="Kodaira H."/>
            <person name="Kondo H."/>
            <person name="Sugawara M."/>
            <person name="Takahashi M."/>
            <person name="Kanda K."/>
            <person name="Yokoi T."/>
            <person name="Furuya T."/>
            <person name="Kikkawa E."/>
            <person name="Omura Y."/>
            <person name="Abe K."/>
            <person name="Kamihara K."/>
            <person name="Katsuta N."/>
            <person name="Sato K."/>
            <person name="Tanikawa M."/>
            <person name="Yamazaki M."/>
            <person name="Ninomiya K."/>
            <person name="Ishibashi T."/>
            <person name="Yamashita H."/>
            <person name="Murakawa K."/>
            <person name="Fujimori K."/>
            <person name="Tanai H."/>
            <person name="Kimata M."/>
            <person name="Watanabe M."/>
            <person name="Hiraoka S."/>
            <person name="Chiba Y."/>
            <person name="Ishida S."/>
            <person name="Ono Y."/>
            <person name="Takiguchi S."/>
            <person name="Watanabe S."/>
            <person name="Yosida M."/>
            <person name="Hotuta T."/>
            <person name="Kusano J."/>
            <person name="Kanehori K."/>
            <person name="Takahashi-Fujii A."/>
            <person name="Hara H."/>
            <person name="Tanase T.-O."/>
            <person name="Nomura Y."/>
            <person name="Togiya S."/>
            <person name="Komai F."/>
            <person name="Hara R."/>
            <person name="Takeuchi K."/>
            <person name="Arita M."/>
            <person name="Imose N."/>
            <person name="Musashino K."/>
            <person name="Yuuki H."/>
            <person name="Oshima A."/>
            <person name="Sasaki N."/>
            <person name="Aotsuka S."/>
            <person name="Yoshikawa Y."/>
            <person name="Matsunawa H."/>
            <person name="Ichihara T."/>
            <person name="Shiohata N."/>
            <person name="Sano S."/>
            <person name="Moriya S."/>
            <person name="Momiyama H."/>
            <person name="Satoh N."/>
            <person name="Takami S."/>
            <person name="Terashima Y."/>
            <person name="Suzuki O."/>
            <person name="Nakagawa S."/>
            <person name="Senoh A."/>
            <person name="Mizoguchi H."/>
            <person name="Goto Y."/>
            <person name="Shimizu F."/>
            <person name="Wakebe H."/>
            <person name="Hishigaki H."/>
            <person name="Watanabe T."/>
            <person name="Sugiyama A."/>
            <person name="Takemoto M."/>
            <person name="Kawakami B."/>
            <person name="Yamazaki M."/>
            <person name="Watanabe K."/>
            <person name="Kumagai A."/>
            <person name="Itakura S."/>
            <person name="Fukuzumi Y."/>
            <person name="Fujimori Y."/>
            <person name="Komiyama M."/>
            <person name="Tashiro H."/>
            <person name="Tanigami A."/>
            <person name="Fujiwara T."/>
            <person name="Ono T."/>
            <person name="Yamada K."/>
            <person name="Fujii Y."/>
            <person name="Ozaki K."/>
            <person name="Hirao M."/>
            <person name="Ohmori Y."/>
            <person name="Kawabata A."/>
            <person name="Hikiji T."/>
            <person name="Kobatake N."/>
            <person name="Inagaki H."/>
            <person name="Ikema Y."/>
            <person name="Okamoto S."/>
            <person name="Okitani R."/>
            <person name="Kawakami T."/>
            <person name="Noguchi S."/>
            <person name="Itoh T."/>
            <person name="Shigeta K."/>
            <person name="Senba T."/>
            <person name="Matsumura K."/>
            <person name="Nakajima Y."/>
            <person name="Mizuno T."/>
            <person name="Morinaga M."/>
            <person name="Sasaki M."/>
            <person name="Togashi T."/>
            <person name="Oyama M."/>
            <person name="Hata H."/>
            <person name="Watanabe M."/>
            <person name="Komatsu T."/>
            <person name="Mizushima-Sugano J."/>
            <person name="Satoh T."/>
            <person name="Shirai Y."/>
            <person name="Takahashi Y."/>
            <person name="Nakagawa K."/>
            <person name="Okumura K."/>
            <person name="Nagase T."/>
            <person name="Nomura N."/>
            <person name="Kikuchi H."/>
            <person name="Masuho Y."/>
            <person name="Yamashita R."/>
            <person name="Nakai K."/>
            <person name="Yada T."/>
            <person name="Nakamura Y."/>
            <person name="Ohara O."/>
            <person name="Isogai T."/>
            <person name="Sugano S."/>
        </authorList>
    </citation>
    <scope>NUCLEOTIDE SEQUENCE [LARGE SCALE MRNA] (ISOFORM 2)</scope>
    <scope>NUCLEOTIDE SEQUENCE [LARGE SCALE MRNA] OF 78-238 (ISOFORM 1)</scope>
    <source>
        <tissue>Placenta</tissue>
    </source>
</reference>
<reference key="2">
    <citation type="journal article" date="2006" name="Nature">
        <title>The finished DNA sequence of human chromosome 12.</title>
        <authorList>
            <person name="Scherer S.E."/>
            <person name="Muzny D.M."/>
            <person name="Buhay C.J."/>
            <person name="Chen R."/>
            <person name="Cree A."/>
            <person name="Ding Y."/>
            <person name="Dugan-Rocha S."/>
            <person name="Gill R."/>
            <person name="Gunaratne P."/>
            <person name="Harris R.A."/>
            <person name="Hawes A.C."/>
            <person name="Hernandez J."/>
            <person name="Hodgson A.V."/>
            <person name="Hume J."/>
            <person name="Jackson A."/>
            <person name="Khan Z.M."/>
            <person name="Kovar-Smith C."/>
            <person name="Lewis L.R."/>
            <person name="Lozado R.J."/>
            <person name="Metzker M.L."/>
            <person name="Milosavljevic A."/>
            <person name="Miner G.R."/>
            <person name="Montgomery K.T."/>
            <person name="Morgan M.B."/>
            <person name="Nazareth L.V."/>
            <person name="Scott G."/>
            <person name="Sodergren E."/>
            <person name="Song X.-Z."/>
            <person name="Steffen D."/>
            <person name="Lovering R.C."/>
            <person name="Wheeler D.A."/>
            <person name="Worley K.C."/>
            <person name="Yuan Y."/>
            <person name="Zhang Z."/>
            <person name="Adams C.Q."/>
            <person name="Ansari-Lari M.A."/>
            <person name="Ayele M."/>
            <person name="Brown M.J."/>
            <person name="Chen G."/>
            <person name="Chen Z."/>
            <person name="Clerc-Blankenburg K.P."/>
            <person name="Davis C."/>
            <person name="Delgado O."/>
            <person name="Dinh H.H."/>
            <person name="Draper H."/>
            <person name="Gonzalez-Garay M.L."/>
            <person name="Havlak P."/>
            <person name="Jackson L.R."/>
            <person name="Jacob L.S."/>
            <person name="Kelly S.H."/>
            <person name="Li L."/>
            <person name="Li Z."/>
            <person name="Liu J."/>
            <person name="Liu W."/>
            <person name="Lu J."/>
            <person name="Maheshwari M."/>
            <person name="Nguyen B.-V."/>
            <person name="Okwuonu G.O."/>
            <person name="Pasternak S."/>
            <person name="Perez L.M."/>
            <person name="Plopper F.J.H."/>
            <person name="Santibanez J."/>
            <person name="Shen H."/>
            <person name="Tabor P.E."/>
            <person name="Verduzco D."/>
            <person name="Waldron L."/>
            <person name="Wang Q."/>
            <person name="Williams G.A."/>
            <person name="Zhang J."/>
            <person name="Zhou J."/>
            <person name="Allen C.C."/>
            <person name="Amin A.G."/>
            <person name="Anyalebechi V."/>
            <person name="Bailey M."/>
            <person name="Barbaria J.A."/>
            <person name="Bimage K.E."/>
            <person name="Bryant N.P."/>
            <person name="Burch P.E."/>
            <person name="Burkett C.E."/>
            <person name="Burrell K.L."/>
            <person name="Calderon E."/>
            <person name="Cardenas V."/>
            <person name="Carter K."/>
            <person name="Casias K."/>
            <person name="Cavazos I."/>
            <person name="Cavazos S.R."/>
            <person name="Ceasar H."/>
            <person name="Chacko J."/>
            <person name="Chan S.N."/>
            <person name="Chavez D."/>
            <person name="Christopoulos C."/>
            <person name="Chu J."/>
            <person name="Cockrell R."/>
            <person name="Cox C.D."/>
            <person name="Dang M."/>
            <person name="Dathorne S.R."/>
            <person name="David R."/>
            <person name="Davis C.M."/>
            <person name="Davy-Carroll L."/>
            <person name="Deshazo D.R."/>
            <person name="Donlin J.E."/>
            <person name="D'Souza L."/>
            <person name="Eaves K.A."/>
            <person name="Egan A."/>
            <person name="Emery-Cohen A.J."/>
            <person name="Escotto M."/>
            <person name="Flagg N."/>
            <person name="Forbes L.D."/>
            <person name="Gabisi A.M."/>
            <person name="Garza M."/>
            <person name="Hamilton C."/>
            <person name="Henderson N."/>
            <person name="Hernandez O."/>
            <person name="Hines S."/>
            <person name="Hogues M.E."/>
            <person name="Huang M."/>
            <person name="Idlebird D.G."/>
            <person name="Johnson R."/>
            <person name="Jolivet A."/>
            <person name="Jones S."/>
            <person name="Kagan R."/>
            <person name="King L.M."/>
            <person name="Leal B."/>
            <person name="Lebow H."/>
            <person name="Lee S."/>
            <person name="LeVan J.M."/>
            <person name="Lewis L.C."/>
            <person name="London P."/>
            <person name="Lorensuhewa L.M."/>
            <person name="Loulseged H."/>
            <person name="Lovett D.A."/>
            <person name="Lucier A."/>
            <person name="Lucier R.L."/>
            <person name="Ma J."/>
            <person name="Madu R.C."/>
            <person name="Mapua P."/>
            <person name="Martindale A.D."/>
            <person name="Martinez E."/>
            <person name="Massey E."/>
            <person name="Mawhiney S."/>
            <person name="Meador M.G."/>
            <person name="Mendez S."/>
            <person name="Mercado C."/>
            <person name="Mercado I.C."/>
            <person name="Merritt C.E."/>
            <person name="Miner Z.L."/>
            <person name="Minja E."/>
            <person name="Mitchell T."/>
            <person name="Mohabbat F."/>
            <person name="Mohabbat K."/>
            <person name="Montgomery B."/>
            <person name="Moore N."/>
            <person name="Morris S."/>
            <person name="Munidasa M."/>
            <person name="Ngo R.N."/>
            <person name="Nguyen N.B."/>
            <person name="Nickerson E."/>
            <person name="Nwaokelemeh O.O."/>
            <person name="Nwokenkwo S."/>
            <person name="Obregon M."/>
            <person name="Oguh M."/>
            <person name="Oragunye N."/>
            <person name="Oviedo R.J."/>
            <person name="Parish B.J."/>
            <person name="Parker D.N."/>
            <person name="Parrish J."/>
            <person name="Parks K.L."/>
            <person name="Paul H.A."/>
            <person name="Payton B.A."/>
            <person name="Perez A."/>
            <person name="Perrin W."/>
            <person name="Pickens A."/>
            <person name="Primus E.L."/>
            <person name="Pu L.-L."/>
            <person name="Puazo M."/>
            <person name="Quiles M.M."/>
            <person name="Quiroz J.B."/>
            <person name="Rabata D."/>
            <person name="Reeves K."/>
            <person name="Ruiz S.J."/>
            <person name="Shao H."/>
            <person name="Sisson I."/>
            <person name="Sonaike T."/>
            <person name="Sorelle R.P."/>
            <person name="Sutton A.E."/>
            <person name="Svatek A.F."/>
            <person name="Svetz L.A."/>
            <person name="Tamerisa K.S."/>
            <person name="Taylor T.R."/>
            <person name="Teague B."/>
            <person name="Thomas N."/>
            <person name="Thorn R.D."/>
            <person name="Trejos Z.Y."/>
            <person name="Trevino B.K."/>
            <person name="Ukegbu O.N."/>
            <person name="Urban J.B."/>
            <person name="Vasquez L.I."/>
            <person name="Vera V.A."/>
            <person name="Villasana D.M."/>
            <person name="Wang L."/>
            <person name="Ward-Moore S."/>
            <person name="Warren J.T."/>
            <person name="Wei X."/>
            <person name="White F."/>
            <person name="Williamson A.L."/>
            <person name="Wleczyk R."/>
            <person name="Wooden H.S."/>
            <person name="Wooden S.H."/>
            <person name="Yen J."/>
            <person name="Yoon L."/>
            <person name="Yoon V."/>
            <person name="Zorrilla S.E."/>
            <person name="Nelson D."/>
            <person name="Kucherlapati R."/>
            <person name="Weinstock G."/>
            <person name="Gibbs R.A."/>
        </authorList>
    </citation>
    <scope>NUCLEOTIDE SEQUENCE [LARGE SCALE GENOMIC DNA]</scope>
</reference>
<reference key="3">
    <citation type="journal article" date="2004" name="Genome Res.">
        <title>The status, quality, and expansion of the NIH full-length cDNA project: the Mammalian Gene Collection (MGC).</title>
        <authorList>
            <consortium name="The MGC Project Team"/>
        </authorList>
    </citation>
    <scope>NUCLEOTIDE SEQUENCE [LARGE SCALE MRNA] (ISOFORM 1)</scope>
    <source>
        <tissue>Liver</tissue>
        <tissue>Skin</tissue>
    </source>
</reference>
<reference key="4">
    <citation type="journal article" date="2006" name="Cell">
        <title>DRAM, a p53-induced modulator of autophagy, is critical for apoptosis.</title>
        <authorList>
            <person name="Crighton D."/>
            <person name="Wilkinson S."/>
            <person name="O'Prey J."/>
            <person name="Syed N."/>
            <person name="Smith P."/>
            <person name="Harrison P.R."/>
            <person name="Gasco M."/>
            <person name="Garrone O."/>
            <person name="Crook T."/>
            <person name="Ryan K.M."/>
        </authorList>
    </citation>
    <scope>FUNCTION</scope>
    <scope>SUBCELLULAR LOCATION</scope>
    <scope>INDUCTION</scope>
</reference>
<reference key="5">
    <citation type="journal article" date="2007" name="Cell Death Differ.">
        <title>p73 regulates DRAM-independent autophagy that does not contribute to programmed cell death.</title>
        <authorList>
            <person name="Crighton D."/>
            <person name="O'prey J."/>
            <person name="Bell H.S."/>
            <person name="Ryan K.M."/>
        </authorList>
    </citation>
    <scope>FUNCTION</scope>
    <scope>INDUCTION</scope>
</reference>